<name>ISCU_DROME</name>
<sequence>MSLVRNSSRLLRSQLKRVQSVPVALYHENVVEHYENPRNVGSLDKKDVTVGTGLVGAPACGDVMKLQIKVDENGKIVDAKFKTFGCGSAIASSSLATEWVKGKSIDEAGKLKNTDIAKELRLPPVKLHCSMLAEDAIKAALADYKVKQQKKVAN</sequence>
<protein>
    <recommendedName>
        <fullName evidence="8">Iron-sulfur cluster assembly enzyme IscU</fullName>
        <shortName evidence="4">fIscU</shortName>
    </recommendedName>
</protein>
<reference evidence="9" key="1">
    <citation type="journal article" date="2000" name="Science">
        <title>The genome sequence of Drosophila melanogaster.</title>
        <authorList>
            <person name="Adams M.D."/>
            <person name="Celniker S.E."/>
            <person name="Holt R.A."/>
            <person name="Evans C.A."/>
            <person name="Gocayne J.D."/>
            <person name="Amanatides P.G."/>
            <person name="Scherer S.E."/>
            <person name="Li P.W."/>
            <person name="Hoskins R.A."/>
            <person name="Galle R.F."/>
            <person name="George R.A."/>
            <person name="Lewis S.E."/>
            <person name="Richards S."/>
            <person name="Ashburner M."/>
            <person name="Henderson S.N."/>
            <person name="Sutton G.G."/>
            <person name="Wortman J.R."/>
            <person name="Yandell M.D."/>
            <person name="Zhang Q."/>
            <person name="Chen L.X."/>
            <person name="Brandon R.C."/>
            <person name="Rogers Y.-H.C."/>
            <person name="Blazej R.G."/>
            <person name="Champe M."/>
            <person name="Pfeiffer B.D."/>
            <person name="Wan K.H."/>
            <person name="Doyle C."/>
            <person name="Baxter E.G."/>
            <person name="Helt G."/>
            <person name="Nelson C.R."/>
            <person name="Miklos G.L.G."/>
            <person name="Abril J.F."/>
            <person name="Agbayani A."/>
            <person name="An H.-J."/>
            <person name="Andrews-Pfannkoch C."/>
            <person name="Baldwin D."/>
            <person name="Ballew R.M."/>
            <person name="Basu A."/>
            <person name="Baxendale J."/>
            <person name="Bayraktaroglu L."/>
            <person name="Beasley E.M."/>
            <person name="Beeson K.Y."/>
            <person name="Benos P.V."/>
            <person name="Berman B.P."/>
            <person name="Bhandari D."/>
            <person name="Bolshakov S."/>
            <person name="Borkova D."/>
            <person name="Botchan M.R."/>
            <person name="Bouck J."/>
            <person name="Brokstein P."/>
            <person name="Brottier P."/>
            <person name="Burtis K.C."/>
            <person name="Busam D.A."/>
            <person name="Butler H."/>
            <person name="Cadieu E."/>
            <person name="Center A."/>
            <person name="Chandra I."/>
            <person name="Cherry J.M."/>
            <person name="Cawley S."/>
            <person name="Dahlke C."/>
            <person name="Davenport L.B."/>
            <person name="Davies P."/>
            <person name="de Pablos B."/>
            <person name="Delcher A."/>
            <person name="Deng Z."/>
            <person name="Mays A.D."/>
            <person name="Dew I."/>
            <person name="Dietz S.M."/>
            <person name="Dodson K."/>
            <person name="Doup L.E."/>
            <person name="Downes M."/>
            <person name="Dugan-Rocha S."/>
            <person name="Dunkov B.C."/>
            <person name="Dunn P."/>
            <person name="Durbin K.J."/>
            <person name="Evangelista C.C."/>
            <person name="Ferraz C."/>
            <person name="Ferriera S."/>
            <person name="Fleischmann W."/>
            <person name="Fosler C."/>
            <person name="Gabrielian A.E."/>
            <person name="Garg N.S."/>
            <person name="Gelbart W.M."/>
            <person name="Glasser K."/>
            <person name="Glodek A."/>
            <person name="Gong F."/>
            <person name="Gorrell J.H."/>
            <person name="Gu Z."/>
            <person name="Guan P."/>
            <person name="Harris M."/>
            <person name="Harris N.L."/>
            <person name="Harvey D.A."/>
            <person name="Heiman T.J."/>
            <person name="Hernandez J.R."/>
            <person name="Houck J."/>
            <person name="Hostin D."/>
            <person name="Houston K.A."/>
            <person name="Howland T.J."/>
            <person name="Wei M.-H."/>
            <person name="Ibegwam C."/>
            <person name="Jalali M."/>
            <person name="Kalush F."/>
            <person name="Karpen G.H."/>
            <person name="Ke Z."/>
            <person name="Kennison J.A."/>
            <person name="Ketchum K.A."/>
            <person name="Kimmel B.E."/>
            <person name="Kodira C.D."/>
            <person name="Kraft C.L."/>
            <person name="Kravitz S."/>
            <person name="Kulp D."/>
            <person name="Lai Z."/>
            <person name="Lasko P."/>
            <person name="Lei Y."/>
            <person name="Levitsky A.A."/>
            <person name="Li J.H."/>
            <person name="Li Z."/>
            <person name="Liang Y."/>
            <person name="Lin X."/>
            <person name="Liu X."/>
            <person name="Mattei B."/>
            <person name="McIntosh T.C."/>
            <person name="McLeod M.P."/>
            <person name="McPherson D."/>
            <person name="Merkulov G."/>
            <person name="Milshina N.V."/>
            <person name="Mobarry C."/>
            <person name="Morris J."/>
            <person name="Moshrefi A."/>
            <person name="Mount S.M."/>
            <person name="Moy M."/>
            <person name="Murphy B."/>
            <person name="Murphy L."/>
            <person name="Muzny D.M."/>
            <person name="Nelson D.L."/>
            <person name="Nelson D.R."/>
            <person name="Nelson K.A."/>
            <person name="Nixon K."/>
            <person name="Nusskern D.R."/>
            <person name="Pacleb J.M."/>
            <person name="Palazzolo M."/>
            <person name="Pittman G.S."/>
            <person name="Pan S."/>
            <person name="Pollard J."/>
            <person name="Puri V."/>
            <person name="Reese M.G."/>
            <person name="Reinert K."/>
            <person name="Remington K."/>
            <person name="Saunders R.D.C."/>
            <person name="Scheeler F."/>
            <person name="Shen H."/>
            <person name="Shue B.C."/>
            <person name="Siden-Kiamos I."/>
            <person name="Simpson M."/>
            <person name="Skupski M.P."/>
            <person name="Smith T.J."/>
            <person name="Spier E."/>
            <person name="Spradling A.C."/>
            <person name="Stapleton M."/>
            <person name="Strong R."/>
            <person name="Sun E."/>
            <person name="Svirskas R."/>
            <person name="Tector C."/>
            <person name="Turner R."/>
            <person name="Venter E."/>
            <person name="Wang A.H."/>
            <person name="Wang X."/>
            <person name="Wang Z.-Y."/>
            <person name="Wassarman D.A."/>
            <person name="Weinstock G.M."/>
            <person name="Weissenbach J."/>
            <person name="Williams S.M."/>
            <person name="Woodage T."/>
            <person name="Worley K.C."/>
            <person name="Wu D."/>
            <person name="Yang S."/>
            <person name="Yao Q.A."/>
            <person name="Ye J."/>
            <person name="Yeh R.-F."/>
            <person name="Zaveri J.S."/>
            <person name="Zhan M."/>
            <person name="Zhang G."/>
            <person name="Zhao Q."/>
            <person name="Zheng L."/>
            <person name="Zheng X.H."/>
            <person name="Zhong F.N."/>
            <person name="Zhong W."/>
            <person name="Zhou X."/>
            <person name="Zhu S.C."/>
            <person name="Zhu X."/>
            <person name="Smith H.O."/>
            <person name="Gibbs R.A."/>
            <person name="Myers E.W."/>
            <person name="Rubin G.M."/>
            <person name="Venter J.C."/>
        </authorList>
    </citation>
    <scope>NUCLEOTIDE SEQUENCE [LARGE SCALE GENOMIC DNA]</scope>
    <source>
        <strain evidence="9">Berkeley</strain>
    </source>
</reference>
<reference evidence="9" key="2">
    <citation type="journal article" date="2002" name="Genome Biol.">
        <title>Annotation of the Drosophila melanogaster euchromatic genome: a systematic review.</title>
        <authorList>
            <person name="Misra S."/>
            <person name="Crosby M.A."/>
            <person name="Mungall C.J."/>
            <person name="Matthews B.B."/>
            <person name="Campbell K.S."/>
            <person name="Hradecky P."/>
            <person name="Huang Y."/>
            <person name="Kaminker J.S."/>
            <person name="Millburn G.H."/>
            <person name="Prochnik S.E."/>
            <person name="Smith C.D."/>
            <person name="Tupy J.L."/>
            <person name="Whitfield E.J."/>
            <person name="Bayraktaroglu L."/>
            <person name="Berman B.P."/>
            <person name="Bettencourt B.R."/>
            <person name="Celniker S.E."/>
            <person name="de Grey A.D.N.J."/>
            <person name="Drysdale R.A."/>
            <person name="Harris N.L."/>
            <person name="Richter J."/>
            <person name="Russo S."/>
            <person name="Schroeder A.J."/>
            <person name="Shu S.Q."/>
            <person name="Stapleton M."/>
            <person name="Yamada C."/>
            <person name="Ashburner M."/>
            <person name="Gelbart W.M."/>
            <person name="Rubin G.M."/>
            <person name="Lewis S.E."/>
        </authorList>
    </citation>
    <scope>GENOME REANNOTATION</scope>
    <source>
        <strain evidence="9">Berkeley</strain>
    </source>
</reference>
<reference evidence="6" key="3">
    <citation type="journal article" date="2002" name="Genome Biol.">
        <title>A Drosophila full-length cDNA resource.</title>
        <authorList>
            <person name="Stapleton M."/>
            <person name="Carlson J.W."/>
            <person name="Brokstein P."/>
            <person name="Yu C."/>
            <person name="Champe M."/>
            <person name="George R.A."/>
            <person name="Guarin H."/>
            <person name="Kronmiller B."/>
            <person name="Pacleb J.M."/>
            <person name="Park S."/>
            <person name="Wan K.H."/>
            <person name="Rubin G.M."/>
            <person name="Celniker S.E."/>
        </authorList>
    </citation>
    <scope>NUCLEOTIDE SEQUENCE [LARGE SCALE MRNA]</scope>
    <source>
        <strain evidence="6">Berkeley</strain>
        <tissue evidence="6">Head</tissue>
    </source>
</reference>
<reference evidence="7" key="4">
    <citation type="submission" date="2016-07" db="EMBL/GenBank/DDBJ databases">
        <authorList>
            <person name="Wan K."/>
            <person name="Booth B."/>
            <person name="Spirohn K."/>
            <person name="Hao T."/>
            <person name="Hu Y."/>
            <person name="Calderwood M."/>
            <person name="Hill D."/>
            <person name="Mohr S."/>
            <person name="Vidal M."/>
            <person name="Celniker S."/>
            <person name="Perrimon N."/>
        </authorList>
    </citation>
    <scope>NUCLEOTIDE SEQUENCE [LARGE SCALE MRNA]</scope>
    <source>
        <strain evidence="7">Berkeley</strain>
    </source>
</reference>
<reference evidence="5" key="5">
    <citation type="journal article" date="2017" name="Metallomics">
        <title>In vitro characterization of a novel Isu homologue from Drosophila melanogaster for de novo FeS-cluster formation.</title>
        <authorList>
            <person name="Dzul S.P."/>
            <person name="Rocha A.G."/>
            <person name="Rawat S."/>
            <person name="Kandegedara A."/>
            <person name="Kusowski A."/>
            <person name="Pain J."/>
            <person name="Murari A."/>
            <person name="Pain D."/>
            <person name="Dancis A."/>
            <person name="Stemmler T.L."/>
        </authorList>
    </citation>
    <scope>FUNCTION</scope>
    <scope>COFACTOR</scope>
    <scope>PATHWAY</scope>
</reference>
<reference evidence="5" key="6">
    <citation type="journal article" date="2018" name="Front. Physiol.">
        <title>Iron Sulfur and Molybdenum Cofactor Enzymes Regulate the Drosophila Life Cycle by Controlling Cell Metabolism.</title>
        <authorList>
            <person name="Marelja Z."/>
            <person name="Leimkuehler S."/>
            <person name="Missirlis F."/>
        </authorList>
    </citation>
    <scope>FUNCTION</scope>
    <scope>INTERACTION WITH NFS1; BCN92 AND FH</scope>
</reference>
<evidence type="ECO:0000255" key="1">
    <source>
        <dbReference type="RuleBase" id="RU362089"/>
    </source>
</evidence>
<evidence type="ECO:0000269" key="2">
    <source>
    </source>
</evidence>
<evidence type="ECO:0000269" key="3">
    <source>
    </source>
</evidence>
<evidence type="ECO:0000303" key="4">
    <source>
    </source>
</evidence>
<evidence type="ECO:0000305" key="5"/>
<evidence type="ECO:0000312" key="6">
    <source>
        <dbReference type="EMBL" id="AAL25267.1"/>
    </source>
</evidence>
<evidence type="ECO:0000312" key="7">
    <source>
        <dbReference type="EMBL" id="ANY27890.1"/>
    </source>
</evidence>
<evidence type="ECO:0000312" key="8">
    <source>
        <dbReference type="FlyBase" id="FBgn0037637"/>
    </source>
</evidence>
<evidence type="ECO:0000312" key="9">
    <source>
        <dbReference type="Proteomes" id="UP000000803"/>
    </source>
</evidence>
<comment type="function">
    <text evidence="2 3">Scaffold protein for the de novo synthesis of iron-sulfur (Fe-S) clusters within mitochondria, which is required for maturation of both mitochondrial and cytoplasmic [2Fe-2S] and [4Fe-4S] proteins (PubMed:27738674). Component of the mitochondrial core iron-sulfur cluster (ISC) assembly complex; regulates its activity (PubMed:29491838).</text>
</comment>
<comment type="cofactor">
    <cofactor evidence="2">
        <name>Fe(2+)</name>
        <dbReference type="ChEBI" id="CHEBI:29033"/>
    </cofactor>
    <cofactor evidence="2">
        <name>[2Fe-2S] cluster</name>
        <dbReference type="ChEBI" id="CHEBI:190135"/>
    </cofactor>
    <text evidence="2">Fe(2+) binding protein that acts as a scaffold for the assembly of iron-sulfur clusters (PubMed:27738674). Binds 1 [2Fe-2S] cluster per subunit (PubMed:27738674).</text>
</comment>
<comment type="pathway">
    <text evidence="2">Cofactor biosynthesis; iron-sulfur cluster biosynthesis.</text>
</comment>
<comment type="subunit">
    <text evidence="3">Component of the mitochondrial core iron-sulfur cluster (ISC) assembly complex at least composed of the cystein desulfurase Nfs1, the scaffold protein IscU, the accessory protein bcn92/Isd11/Lyrm4, and probably fh/frataxin (PubMed:29491838). Interacts with Nfs1 (PubMed:29491838).</text>
</comment>
<comment type="similarity">
    <text evidence="1">Belongs to the NifU family.</text>
</comment>
<organism evidence="9">
    <name type="scientific">Drosophila melanogaster</name>
    <name type="common">Fruit fly</name>
    <dbReference type="NCBI Taxonomy" id="7227"/>
    <lineage>
        <taxon>Eukaryota</taxon>
        <taxon>Metazoa</taxon>
        <taxon>Ecdysozoa</taxon>
        <taxon>Arthropoda</taxon>
        <taxon>Hexapoda</taxon>
        <taxon>Insecta</taxon>
        <taxon>Pterygota</taxon>
        <taxon>Neoptera</taxon>
        <taxon>Endopterygota</taxon>
        <taxon>Diptera</taxon>
        <taxon>Brachycera</taxon>
        <taxon>Muscomorpha</taxon>
        <taxon>Ephydroidea</taxon>
        <taxon>Drosophilidae</taxon>
        <taxon>Drosophila</taxon>
        <taxon>Sophophora</taxon>
    </lineage>
</organism>
<feature type="chain" id="PRO_0000461858" description="Iron-sulfur cluster assembly enzyme IscU">
    <location>
        <begin position="1"/>
        <end position="154"/>
    </location>
</feature>
<gene>
    <name evidence="8" type="primary">IscU</name>
    <name evidence="8" type="synonym">Isu1</name>
    <name evidence="8" type="ORF">CG9836</name>
</gene>
<accession>Q9VHK6</accession>
<dbReference type="EMBL" id="AE014297">
    <property type="protein sequence ID" value="AAF54298.1"/>
    <property type="molecule type" value="Genomic_DNA"/>
</dbReference>
<dbReference type="EMBL" id="AY060228">
    <property type="protein sequence ID" value="AAL25267.1"/>
    <property type="molecule type" value="mRNA"/>
</dbReference>
<dbReference type="EMBL" id="KX532080">
    <property type="protein sequence ID" value="ANY27890.1"/>
    <property type="molecule type" value="mRNA"/>
</dbReference>
<dbReference type="RefSeq" id="NP_649840.1">
    <property type="nucleotide sequence ID" value="NM_141583.4"/>
</dbReference>
<dbReference type="SMR" id="Q9VHK6"/>
<dbReference type="FunCoup" id="Q9VHK6">
    <property type="interactions" value="1557"/>
</dbReference>
<dbReference type="IntAct" id="Q9VHK6">
    <property type="interactions" value="7"/>
</dbReference>
<dbReference type="STRING" id="7227.FBpp0081412"/>
<dbReference type="PaxDb" id="7227-FBpp0081412"/>
<dbReference type="DNASU" id="41059"/>
<dbReference type="EnsemblMetazoa" id="FBtr0081930">
    <property type="protein sequence ID" value="FBpp0081412"/>
    <property type="gene ID" value="FBgn0037637"/>
</dbReference>
<dbReference type="GeneID" id="41059"/>
<dbReference type="KEGG" id="dme:Dmel_CG9836"/>
<dbReference type="UCSC" id="CG9836-RA">
    <property type="organism name" value="d. melanogaster"/>
</dbReference>
<dbReference type="AGR" id="FB:FBgn0037637"/>
<dbReference type="CTD" id="23479"/>
<dbReference type="FlyBase" id="FBgn0037637">
    <property type="gene designation" value="IscU"/>
</dbReference>
<dbReference type="VEuPathDB" id="VectorBase:FBgn0037637"/>
<dbReference type="eggNOG" id="KOG3361">
    <property type="taxonomic scope" value="Eukaryota"/>
</dbReference>
<dbReference type="GeneTree" id="ENSGT00390000015813"/>
<dbReference type="HOGENOM" id="CLU_079283_5_0_1"/>
<dbReference type="OMA" id="SMVTEMV"/>
<dbReference type="OrthoDB" id="1925777at2759"/>
<dbReference type="Reactome" id="R-DME-1362409">
    <property type="pathway name" value="Mitochondrial iron-sulfur cluster biogenesis"/>
</dbReference>
<dbReference type="Reactome" id="R-DME-9865881">
    <property type="pathway name" value="Complex III assembly"/>
</dbReference>
<dbReference type="SABIO-RK" id="Q9VHK6"/>
<dbReference type="UniPathway" id="UPA00266"/>
<dbReference type="BioGRID-ORCS" id="41059">
    <property type="hits" value="0 hits in 1 CRISPR screen"/>
</dbReference>
<dbReference type="Proteomes" id="UP000000803">
    <property type="component" value="Chromosome 3R"/>
</dbReference>
<dbReference type="Bgee" id="FBgn0037637">
    <property type="expression patterns" value="Expressed in adult antennal lobe projection neuron adPN (Drosophila) in brain and 289 other cell types or tissues"/>
</dbReference>
<dbReference type="GO" id="GO:0005737">
    <property type="term" value="C:cytoplasm"/>
    <property type="evidence" value="ECO:0000318"/>
    <property type="project" value="GO_Central"/>
</dbReference>
<dbReference type="GO" id="GO:0099128">
    <property type="term" value="C:mitochondrial [2Fe-2S] assembly complex"/>
    <property type="evidence" value="ECO:0000314"/>
    <property type="project" value="FlyBase"/>
</dbReference>
<dbReference type="GO" id="GO:0005759">
    <property type="term" value="C:mitochondrial matrix"/>
    <property type="evidence" value="ECO:0000250"/>
    <property type="project" value="FlyBase"/>
</dbReference>
<dbReference type="GO" id="GO:0051537">
    <property type="term" value="F:2 iron, 2 sulfur cluster binding"/>
    <property type="evidence" value="ECO:0000318"/>
    <property type="project" value="GO_Central"/>
</dbReference>
<dbReference type="GO" id="GO:0008198">
    <property type="term" value="F:ferrous iron binding"/>
    <property type="evidence" value="ECO:0000314"/>
    <property type="project" value="FlyBase"/>
</dbReference>
<dbReference type="GO" id="GO:0140132">
    <property type="term" value="F:iron-sulfur cluster chaperone activity"/>
    <property type="evidence" value="ECO:0000250"/>
    <property type="project" value="FlyBase"/>
</dbReference>
<dbReference type="GO" id="GO:0044571">
    <property type="term" value="P:[2Fe-2S] cluster assembly"/>
    <property type="evidence" value="ECO:0000314"/>
    <property type="project" value="FlyBase"/>
</dbReference>
<dbReference type="GO" id="GO:0006879">
    <property type="term" value="P:intracellular iron ion homeostasis"/>
    <property type="evidence" value="ECO:0000318"/>
    <property type="project" value="GO_Central"/>
</dbReference>
<dbReference type="GO" id="GO:1902958">
    <property type="term" value="P:positive regulation of mitochondrial electron transport, NADH to ubiquinone"/>
    <property type="evidence" value="ECO:0000315"/>
    <property type="project" value="FlyBase"/>
</dbReference>
<dbReference type="CDD" id="cd06664">
    <property type="entry name" value="IscU_like"/>
    <property type="match status" value="1"/>
</dbReference>
<dbReference type="FunFam" id="3.90.1010.10:FF:000001">
    <property type="entry name" value="Iron-sulfur cluster assembly scaffold protein IscU"/>
    <property type="match status" value="1"/>
</dbReference>
<dbReference type="Gene3D" id="3.90.1010.10">
    <property type="match status" value="1"/>
</dbReference>
<dbReference type="InterPro" id="IPR011339">
    <property type="entry name" value="ISCU"/>
</dbReference>
<dbReference type="InterPro" id="IPR002871">
    <property type="entry name" value="NIF_FeS_clus_asmbl_NifU_N"/>
</dbReference>
<dbReference type="NCBIfam" id="TIGR01999">
    <property type="entry name" value="iscU"/>
    <property type="match status" value="1"/>
</dbReference>
<dbReference type="PANTHER" id="PTHR10093">
    <property type="entry name" value="IRON-SULFUR CLUSTER ASSEMBLY ENZYME NIFU HOMOLOG"/>
    <property type="match status" value="1"/>
</dbReference>
<dbReference type="Pfam" id="PF01592">
    <property type="entry name" value="NifU_N"/>
    <property type="match status" value="1"/>
</dbReference>
<dbReference type="SUPFAM" id="SSF82649">
    <property type="entry name" value="SufE/NifU"/>
    <property type="match status" value="1"/>
</dbReference>
<proteinExistence type="evidence at protein level"/>
<keyword id="KW-0001">2Fe-2S</keyword>
<keyword id="KW-0408">Iron</keyword>
<keyword id="KW-0411">Iron-sulfur</keyword>
<keyword id="KW-0479">Metal-binding</keyword>
<keyword id="KW-1185">Reference proteome</keyword>